<organism>
    <name type="scientific">Cavia porcellus</name>
    <name type="common">Guinea pig</name>
    <dbReference type="NCBI Taxonomy" id="10141"/>
    <lineage>
        <taxon>Eukaryota</taxon>
        <taxon>Metazoa</taxon>
        <taxon>Chordata</taxon>
        <taxon>Craniata</taxon>
        <taxon>Vertebrata</taxon>
        <taxon>Euteleostomi</taxon>
        <taxon>Mammalia</taxon>
        <taxon>Eutheria</taxon>
        <taxon>Euarchontoglires</taxon>
        <taxon>Glires</taxon>
        <taxon>Rodentia</taxon>
        <taxon>Hystricomorpha</taxon>
        <taxon>Caviidae</taxon>
        <taxon>Cavia</taxon>
    </lineage>
</organism>
<dbReference type="PIR" id="A26089">
    <property type="entry name" value="GMGPB"/>
</dbReference>
<dbReference type="STRING" id="10141.ENSCPOP00000008841"/>
<dbReference type="eggNOG" id="ENOG502SA9S">
    <property type="taxonomic scope" value="Eukaryota"/>
</dbReference>
<dbReference type="HOGENOM" id="CLU_3386965_0_0_1"/>
<dbReference type="InParanoid" id="P06885"/>
<dbReference type="Proteomes" id="UP000005447">
    <property type="component" value="Unassembled WGS sequence"/>
</dbReference>
<dbReference type="GO" id="GO:0005615">
    <property type="term" value="C:extracellular space"/>
    <property type="evidence" value="ECO:0007669"/>
    <property type="project" value="TreeGrafter"/>
</dbReference>
<dbReference type="GO" id="GO:0005179">
    <property type="term" value="F:hormone activity"/>
    <property type="evidence" value="ECO:0007669"/>
    <property type="project" value="UniProtKB-KW"/>
</dbReference>
<dbReference type="GO" id="GO:0007186">
    <property type="term" value="P:G protein-coupled receptor signaling pathway"/>
    <property type="evidence" value="ECO:0007669"/>
    <property type="project" value="TreeGrafter"/>
</dbReference>
<dbReference type="GO" id="GO:0032094">
    <property type="term" value="P:response to food"/>
    <property type="evidence" value="ECO:0007669"/>
    <property type="project" value="TreeGrafter"/>
</dbReference>
<dbReference type="InterPro" id="IPR039236">
    <property type="entry name" value="GAST"/>
</dbReference>
<dbReference type="InterPro" id="IPR013152">
    <property type="entry name" value="Gastrin/cholecystokinin_CS"/>
</dbReference>
<dbReference type="PANTHER" id="PTHR19309">
    <property type="entry name" value="GASTRIN"/>
    <property type="match status" value="1"/>
</dbReference>
<dbReference type="PANTHER" id="PTHR19309:SF0">
    <property type="entry name" value="GASTRIN"/>
    <property type="match status" value="1"/>
</dbReference>
<dbReference type="PROSITE" id="PS00259">
    <property type="entry name" value="GASTRIN"/>
    <property type="match status" value="1"/>
</dbReference>
<gene>
    <name type="primary">GAST</name>
    <name type="synonym">GAS</name>
</gene>
<reference key="1">
    <citation type="journal article" date="1986" name="Life Sci.">
        <title>Guinea pig 33-amino acid gastrin.</title>
        <authorList>
            <person name="Bonato C."/>
            <person name="Eng J."/>
            <person name="Pan Y.-C.E."/>
            <person name="Miedel M."/>
            <person name="Hulmes J.D."/>
            <person name="Yalow R.S."/>
        </authorList>
    </citation>
    <scope>PROTEIN SEQUENCE</scope>
    <scope>PYROGLUTAMATE FORMATION AT GLN-1</scope>
    <scope>AMIDATION AT PHE-33</scope>
</reference>
<comment type="function">
    <text>Gastrin stimulates the stomach mucosa to produce and secrete hydrochloric acid and the pancreas to secrete its digestive enzymes. It also stimulates smooth muscle contraction and increases blood circulation and water secretion in the stomach and intestine.</text>
</comment>
<comment type="subcellular location">
    <subcellularLocation>
        <location>Secreted</location>
    </subcellularLocation>
</comment>
<comment type="similarity">
    <text evidence="2">Belongs to the gastrin/cholecystokinin family.</text>
</comment>
<name>GAST_CAVPO</name>
<proteinExistence type="evidence at protein level"/>
<feature type="peptide" id="PRO_0000010619" description="Big gastrin" evidence="1">
    <location>
        <begin position="1"/>
        <end position="33"/>
    </location>
</feature>
<feature type="peptide" id="PRO_0000010620" description="Gastrin">
    <location>
        <begin position="18"/>
        <end position="33"/>
    </location>
</feature>
<feature type="modified residue" description="Pyrrolidone carboxylic acid" evidence="1">
    <location>
        <position position="1"/>
    </location>
</feature>
<feature type="modified residue" description="Phenylalanine amide" evidence="1">
    <location>
        <position position="33"/>
    </location>
</feature>
<evidence type="ECO:0000269" key="1">
    <source>
    </source>
</evidence>
<evidence type="ECO:0000305" key="2"/>
<accession>P06885</accession>
<sequence>QLGPQVPAHLRTDLSKKQGPWAEEEAAYGWMDF</sequence>
<protein>
    <recommendedName>
        <fullName>Gastrin</fullName>
    </recommendedName>
    <component>
        <recommendedName>
            <fullName>Big gastrin</fullName>
        </recommendedName>
        <alternativeName>
            <fullName>Gastrin-33</fullName>
            <shortName>G33</shortName>
        </alternativeName>
    </component>
    <component>
        <recommendedName>
            <fullName>Gastrin</fullName>
        </recommendedName>
    </component>
</protein>
<keyword id="KW-0027">Amidation</keyword>
<keyword id="KW-0165">Cleavage on pair of basic residues</keyword>
<keyword id="KW-0903">Direct protein sequencing</keyword>
<keyword id="KW-0372">Hormone</keyword>
<keyword id="KW-0873">Pyrrolidone carboxylic acid</keyword>
<keyword id="KW-1185">Reference proteome</keyword>
<keyword id="KW-0964">Secreted</keyword>